<protein>
    <recommendedName>
        <fullName>Turripeptide IX-01</fullName>
    </recommendedName>
</protein>
<name>TU91_GEMSP</name>
<reference key="1">
    <citation type="submission" date="2010-02" db="EMBL/GenBank/DDBJ databases">
        <title>Cysteine-rich toxin gene families from Gemmula speciosa (Reeve, 1843).</title>
        <authorList>
            <person name="Uichanco J.A.V."/>
            <person name="Planta J.R.G."/>
            <person name="Santos A.D."/>
            <person name="Concepcion G.P."/>
        </authorList>
    </citation>
    <scope>NUCLEOTIDE SEQUENCE [MRNA]</scope>
    <source>
        <tissue>Venom duct</tissue>
    </source>
</reference>
<proteinExistence type="evidence at transcript level"/>
<sequence>MGFYMLLTVALLLTSFMSVEATPVDQAERSAMKESGLAHRIEPRYASCEAAEADCIHDDCFSEDTYTDVCQESCQYMYDNCMDD</sequence>
<organism>
    <name type="scientific">Gemmula speciosa</name>
    <name type="common">Splendid gem-turris</name>
    <name type="synonym">Pleurotoma speciosa</name>
    <dbReference type="NCBI Taxonomy" id="439592"/>
    <lineage>
        <taxon>Eukaryota</taxon>
        <taxon>Metazoa</taxon>
        <taxon>Spiralia</taxon>
        <taxon>Lophotrochozoa</taxon>
        <taxon>Mollusca</taxon>
        <taxon>Gastropoda</taxon>
        <taxon>Caenogastropoda</taxon>
        <taxon>Neogastropoda</taxon>
        <taxon>Conoidea</taxon>
        <taxon>Turridae</taxon>
        <taxon>Gemmula</taxon>
    </lineage>
</organism>
<dbReference type="EMBL" id="GU721049">
    <property type="protein sequence ID" value="ADE28866.1"/>
    <property type="molecule type" value="mRNA"/>
</dbReference>
<dbReference type="GO" id="GO:0005576">
    <property type="term" value="C:extracellular region"/>
    <property type="evidence" value="ECO:0007669"/>
    <property type="project" value="UniProtKB-SubCell"/>
</dbReference>
<dbReference type="GO" id="GO:0090729">
    <property type="term" value="F:toxin activity"/>
    <property type="evidence" value="ECO:0007669"/>
    <property type="project" value="UniProtKB-KW"/>
</dbReference>
<evidence type="ECO:0000250" key="1"/>
<evidence type="ECO:0000255" key="2"/>
<feature type="signal peptide" evidence="2">
    <location>
        <begin position="1"/>
        <end position="21"/>
    </location>
</feature>
<feature type="propeptide" id="PRO_0000415063" evidence="1">
    <location>
        <begin position="22"/>
        <end position="39"/>
    </location>
</feature>
<feature type="peptide" id="PRO_0000415064" description="Turripeptide IX-01">
    <location>
        <begin position="41"/>
        <end position="84"/>
    </location>
</feature>
<feature type="disulfide bond" evidence="1">
    <location>
        <begin position="48"/>
        <end position="70"/>
    </location>
</feature>
<feature type="disulfide bond" evidence="1">
    <location>
        <begin position="55"/>
        <end position="74"/>
    </location>
</feature>
<feature type="disulfide bond" evidence="1">
    <location>
        <begin position="60"/>
        <end position="81"/>
    </location>
</feature>
<keyword id="KW-1015">Disulfide bond</keyword>
<keyword id="KW-0528">Neurotoxin</keyword>
<keyword id="KW-0964">Secreted</keyword>
<keyword id="KW-0732">Signal</keyword>
<keyword id="KW-0800">Toxin</keyword>
<comment type="subcellular location">
    <subcellularLocation>
        <location evidence="1">Secreted</location>
    </subcellularLocation>
</comment>
<comment type="tissue specificity">
    <text>Expressed by the venom duct.</text>
</comment>
<comment type="domain">
    <text>The cysteine framework is IX (C-C-C-C-C-C).</text>
</comment>
<accession>D5KXG8</accession>